<keyword id="KW-0150">Chloroplast</keyword>
<keyword id="KW-0249">Electron transport</keyword>
<keyword id="KW-0349">Heme</keyword>
<keyword id="KW-0408">Iron</keyword>
<keyword id="KW-0472">Membrane</keyword>
<keyword id="KW-0479">Metal-binding</keyword>
<keyword id="KW-0602">Photosynthesis</keyword>
<keyword id="KW-0604">Photosystem II</keyword>
<keyword id="KW-0934">Plastid</keyword>
<keyword id="KW-0793">Thylakoid</keyword>
<keyword id="KW-0812">Transmembrane</keyword>
<keyword id="KW-1133">Transmembrane helix</keyword>
<keyword id="KW-0813">Transport</keyword>
<dbReference type="EMBL" id="AP008956">
    <property type="protein sequence ID" value="BAE97221.1"/>
    <property type="molecule type" value="Genomic_DNA"/>
</dbReference>
<dbReference type="RefSeq" id="YP_665574.1">
    <property type="nucleotide sequence ID" value="NC_008235.1"/>
</dbReference>
<dbReference type="SMR" id="Q14FE1"/>
<dbReference type="GeneID" id="4178163"/>
<dbReference type="KEGG" id="palz:4178163"/>
<dbReference type="OrthoDB" id="837at3646"/>
<dbReference type="GO" id="GO:0009535">
    <property type="term" value="C:chloroplast thylakoid membrane"/>
    <property type="evidence" value="ECO:0007669"/>
    <property type="project" value="UniProtKB-SubCell"/>
</dbReference>
<dbReference type="GO" id="GO:0009539">
    <property type="term" value="C:photosystem II reaction center"/>
    <property type="evidence" value="ECO:0007669"/>
    <property type="project" value="InterPro"/>
</dbReference>
<dbReference type="GO" id="GO:0009055">
    <property type="term" value="F:electron transfer activity"/>
    <property type="evidence" value="ECO:0007669"/>
    <property type="project" value="UniProtKB-UniRule"/>
</dbReference>
<dbReference type="GO" id="GO:0020037">
    <property type="term" value="F:heme binding"/>
    <property type="evidence" value="ECO:0007669"/>
    <property type="project" value="InterPro"/>
</dbReference>
<dbReference type="GO" id="GO:0005506">
    <property type="term" value="F:iron ion binding"/>
    <property type="evidence" value="ECO:0007669"/>
    <property type="project" value="UniProtKB-UniRule"/>
</dbReference>
<dbReference type="GO" id="GO:0009767">
    <property type="term" value="P:photosynthetic electron transport chain"/>
    <property type="evidence" value="ECO:0007669"/>
    <property type="project" value="InterPro"/>
</dbReference>
<dbReference type="HAMAP" id="MF_00643">
    <property type="entry name" value="PSII_PsbF"/>
    <property type="match status" value="1"/>
</dbReference>
<dbReference type="InterPro" id="IPR006241">
    <property type="entry name" value="PSII_cyt_b559_bsu"/>
</dbReference>
<dbReference type="InterPro" id="IPR006216">
    <property type="entry name" value="PSII_cyt_b559_CS"/>
</dbReference>
<dbReference type="InterPro" id="IPR013081">
    <property type="entry name" value="PSII_cyt_b559_N"/>
</dbReference>
<dbReference type="NCBIfam" id="TIGR01333">
    <property type="entry name" value="cyt_b559_beta"/>
    <property type="match status" value="1"/>
</dbReference>
<dbReference type="Pfam" id="PF00283">
    <property type="entry name" value="Cytochrom_B559"/>
    <property type="match status" value="1"/>
</dbReference>
<dbReference type="PIRSF" id="PIRSF000037">
    <property type="entry name" value="PsbF"/>
    <property type="match status" value="1"/>
</dbReference>
<dbReference type="SUPFAM" id="SSF161045">
    <property type="entry name" value="Cytochrome b559 subunits"/>
    <property type="match status" value="1"/>
</dbReference>
<dbReference type="PROSITE" id="PS00537">
    <property type="entry name" value="CYTOCHROME_B559"/>
    <property type="match status" value="1"/>
</dbReference>
<name>PSBF_POPAL</name>
<reference key="1">
    <citation type="submission" date="2005-03" db="EMBL/GenBank/DDBJ databases">
        <title>Complete structure of the chloroplast genome of Populus alba.</title>
        <authorList>
            <person name="Okumura S."/>
            <person name="Yamashita A."/>
            <person name="Kanamoto H."/>
            <person name="Hattori M."/>
            <person name="Takase H."/>
            <person name="Tomizawa K."/>
        </authorList>
    </citation>
    <scope>NUCLEOTIDE SEQUENCE [LARGE SCALE GENOMIC DNA]</scope>
</reference>
<sequence length="39" mass="4424">MTIDRTYPIFTVRWLAVHGLAVPTVSFLGSISAMQFIQR</sequence>
<protein>
    <recommendedName>
        <fullName evidence="1">Cytochrome b559 subunit beta</fullName>
    </recommendedName>
    <alternativeName>
        <fullName evidence="1">PSII reaction center subunit VI</fullName>
    </alternativeName>
</protein>
<evidence type="ECO:0000255" key="1">
    <source>
        <dbReference type="HAMAP-Rule" id="MF_00643"/>
    </source>
</evidence>
<gene>
    <name evidence="1" type="primary">psbF</name>
</gene>
<geneLocation type="chloroplast"/>
<comment type="function">
    <text evidence="1">This b-type cytochrome is tightly associated with the reaction center of photosystem II (PSII). PSII is a light-driven water:plastoquinone oxidoreductase that uses light energy to abstract electrons from H(2)O, generating O(2) and a proton gradient subsequently used for ATP formation. It consists of a core antenna complex that captures photons, and an electron transfer chain that converts photonic excitation into a charge separation.</text>
</comment>
<comment type="cofactor">
    <cofactor evidence="1">
        <name>heme b</name>
        <dbReference type="ChEBI" id="CHEBI:60344"/>
    </cofactor>
    <text evidence="1">With its partner (PsbE) binds heme. PSII binds additional chlorophylls, carotenoids and specific lipids.</text>
</comment>
<comment type="subunit">
    <text evidence="1">Heterodimer of an alpha subunit and a beta subunit. PSII is composed of 1 copy each of membrane proteins PsbA, PsbB, PsbC, PsbD, PsbE, PsbF, PsbH, PsbI, PsbJ, PsbK, PsbL, PsbM, PsbT, PsbX, PsbY, PsbZ, Psb30/Ycf12, at least 3 peripheral proteins of the oxygen-evolving complex and a large number of cofactors. It forms dimeric complexes.</text>
</comment>
<comment type="subcellular location">
    <subcellularLocation>
        <location evidence="1">Plastid</location>
        <location evidence="1">Chloroplast thylakoid membrane</location>
        <topology evidence="1">Single-pass membrane protein</topology>
    </subcellularLocation>
</comment>
<comment type="similarity">
    <text evidence="1">Belongs to the PsbE/PsbF family.</text>
</comment>
<organism>
    <name type="scientific">Populus alba</name>
    <name type="common">White poplar</name>
    <dbReference type="NCBI Taxonomy" id="43335"/>
    <lineage>
        <taxon>Eukaryota</taxon>
        <taxon>Viridiplantae</taxon>
        <taxon>Streptophyta</taxon>
        <taxon>Embryophyta</taxon>
        <taxon>Tracheophyta</taxon>
        <taxon>Spermatophyta</taxon>
        <taxon>Magnoliopsida</taxon>
        <taxon>eudicotyledons</taxon>
        <taxon>Gunneridae</taxon>
        <taxon>Pentapetalae</taxon>
        <taxon>rosids</taxon>
        <taxon>fabids</taxon>
        <taxon>Malpighiales</taxon>
        <taxon>Salicaceae</taxon>
        <taxon>Saliceae</taxon>
        <taxon>Populus</taxon>
    </lineage>
</organism>
<proteinExistence type="inferred from homology"/>
<feature type="chain" id="PRO_0000275738" description="Cytochrome b559 subunit beta">
    <location>
        <begin position="1"/>
        <end position="39"/>
    </location>
</feature>
<feature type="transmembrane region" description="Helical" evidence="1">
    <location>
        <begin position="14"/>
        <end position="30"/>
    </location>
</feature>
<feature type="binding site" description="axial binding residue" evidence="1">
    <location>
        <position position="18"/>
    </location>
    <ligand>
        <name>heme</name>
        <dbReference type="ChEBI" id="CHEBI:30413"/>
        <note>ligand shared with alpha subunit</note>
    </ligand>
    <ligandPart>
        <name>Fe</name>
        <dbReference type="ChEBI" id="CHEBI:18248"/>
    </ligandPart>
</feature>
<accession>Q14FE1</accession>